<proteinExistence type="evidence at protein level"/>
<dbReference type="GO" id="GO:0005576">
    <property type="term" value="C:extracellular region"/>
    <property type="evidence" value="ECO:0007669"/>
    <property type="project" value="UniProtKB-SubCell"/>
</dbReference>
<dbReference type="GO" id="GO:0006952">
    <property type="term" value="P:defense response"/>
    <property type="evidence" value="ECO:0007669"/>
    <property type="project" value="UniProtKB-KW"/>
</dbReference>
<comment type="subcellular location">
    <subcellularLocation>
        <location>Secreted</location>
    </subcellularLocation>
</comment>
<comment type="tissue specificity">
    <text>Expressed by the skin glands.</text>
</comment>
<feature type="peptide" id="PRO_0000043794" description="Electrin-3">
    <location>
        <begin position="1"/>
        <end position="5"/>
    </location>
</feature>
<feature type="modified residue" description="Methionine amide" evidence="1">
    <location>
        <position position="5"/>
    </location>
</feature>
<organism>
    <name type="scientific">Litoria rubella</name>
    <name type="common">Desert tree frog</name>
    <name type="synonym">Hyla rubella</name>
    <dbReference type="NCBI Taxonomy" id="104895"/>
    <lineage>
        <taxon>Eukaryota</taxon>
        <taxon>Metazoa</taxon>
        <taxon>Chordata</taxon>
        <taxon>Craniata</taxon>
        <taxon>Vertebrata</taxon>
        <taxon>Euteleostomi</taxon>
        <taxon>Amphibia</taxon>
        <taxon>Batrachia</taxon>
        <taxon>Anura</taxon>
        <taxon>Neobatrachia</taxon>
        <taxon>Hyloidea</taxon>
        <taxon>Hylidae</taxon>
        <taxon>Pelodryadinae</taxon>
        <taxon>Litoria</taxon>
    </lineage>
</organism>
<sequence length="5" mass="630">FVHPM</sequence>
<protein>
    <recommendedName>
        <fullName>Electrin-3</fullName>
    </recommendedName>
</protein>
<evidence type="ECO:0000269" key="1">
    <source ref="1"/>
</evidence>
<reference key="1">
    <citation type="journal article" date="1999" name="Aust. J. Chem.">
        <title>Peptides from the skin glands of the Australian buzzing tree frog Litori electrica. Comparison with the skin peptides from Litoria rubella.</title>
        <authorList>
            <person name="Wabnitz P.A."/>
            <person name="Bowie J.H."/>
            <person name="Tyler M.J."/>
            <person name="Wallace J.C."/>
        </authorList>
    </citation>
    <scope>PROTEIN SEQUENCE</scope>
    <scope>AMIDATION AT MET-5</scope>
    <source>
        <tissue>Skin secretion</tissue>
    </source>
</reference>
<keyword id="KW-0027">Amidation</keyword>
<keyword id="KW-0878">Amphibian defense peptide</keyword>
<keyword id="KW-0903">Direct protein sequencing</keyword>
<keyword id="KW-0964">Secreted</keyword>
<name>EI03_LITRU</name>
<accession>P82099</accession>